<accession>B1XI96</accession>
<proteinExistence type="inferred from homology"/>
<protein>
    <recommendedName>
        <fullName evidence="1">Dihydroorotase</fullName>
        <shortName evidence="1">DHOase</shortName>
        <ecNumber evidence="1">3.5.2.3</ecNumber>
    </recommendedName>
</protein>
<organism>
    <name type="scientific">Picosynechococcus sp. (strain ATCC 27264 / PCC 7002 / PR-6)</name>
    <name type="common">Agmenellum quadruplicatum</name>
    <dbReference type="NCBI Taxonomy" id="32049"/>
    <lineage>
        <taxon>Bacteria</taxon>
        <taxon>Bacillati</taxon>
        <taxon>Cyanobacteriota</taxon>
        <taxon>Cyanophyceae</taxon>
        <taxon>Oscillatoriophycideae</taxon>
        <taxon>Chroococcales</taxon>
        <taxon>Geminocystaceae</taxon>
        <taxon>Picosynechococcus</taxon>
    </lineage>
</organism>
<gene>
    <name evidence="1" type="primary">pyrC</name>
    <name type="ordered locus">SYNPCC7002_A2097</name>
</gene>
<sequence>MEKITLTRPDDWHLHLRDGEALKAVLPDTVRQFARAIVMPNLKPPVRTVAEAAAYHDRILAAIPPGRTFEPLMTLYLTDNTSPAEIQAAKESGFVKAVKYYPAGATTNSDLGVTDIRKCDAVFEAMQTVDLPLLLHGEVTDHRVDVFDREKVFIETYLRPLKERFPQLRIVLEHITTKDAVEFVLASDEKVAATITPQHLLFNRNSIFQGGIRPHFYCLPILKRETHREALLEAATSGNPKFFLGTDSAPHGRDRKESDCGCAGCYSALHALELYATVFEAADALDKLEGFASFYGPDFYQLPRNTEKITLTKTPWQIPDALPFPESSLVPLWAGQELSWKFAPVA</sequence>
<name>PYRC_PICP2</name>
<keyword id="KW-0378">Hydrolase</keyword>
<keyword id="KW-0479">Metal-binding</keyword>
<keyword id="KW-0665">Pyrimidine biosynthesis</keyword>
<keyword id="KW-1185">Reference proteome</keyword>
<keyword id="KW-0862">Zinc</keyword>
<evidence type="ECO:0000255" key="1">
    <source>
        <dbReference type="HAMAP-Rule" id="MF_00219"/>
    </source>
</evidence>
<comment type="function">
    <text evidence="1">Catalyzes the reversible cyclization of carbamoyl aspartate to dihydroorotate.</text>
</comment>
<comment type="catalytic activity">
    <reaction evidence="1">
        <text>(S)-dihydroorotate + H2O = N-carbamoyl-L-aspartate + H(+)</text>
        <dbReference type="Rhea" id="RHEA:24296"/>
        <dbReference type="ChEBI" id="CHEBI:15377"/>
        <dbReference type="ChEBI" id="CHEBI:15378"/>
        <dbReference type="ChEBI" id="CHEBI:30864"/>
        <dbReference type="ChEBI" id="CHEBI:32814"/>
        <dbReference type="EC" id="3.5.2.3"/>
    </reaction>
</comment>
<comment type="cofactor">
    <cofactor evidence="1">
        <name>Zn(2+)</name>
        <dbReference type="ChEBI" id="CHEBI:29105"/>
    </cofactor>
    <text evidence="1">Binds 2 Zn(2+) ions per subunit.</text>
</comment>
<comment type="pathway">
    <text evidence="1">Pyrimidine metabolism; UMP biosynthesis via de novo pathway; (S)-dihydroorotate from bicarbonate: step 3/3.</text>
</comment>
<comment type="subunit">
    <text evidence="1">Homodimer.</text>
</comment>
<comment type="similarity">
    <text evidence="1">Belongs to the metallo-dependent hydrolases superfamily. DHOase family. Class II DHOase subfamily.</text>
</comment>
<feature type="chain" id="PRO_1000100065" description="Dihydroorotase">
    <location>
        <begin position="1"/>
        <end position="346"/>
    </location>
</feature>
<feature type="active site" evidence="1">
    <location>
        <position position="247"/>
    </location>
</feature>
<feature type="binding site" evidence="1">
    <location>
        <position position="13"/>
    </location>
    <ligand>
        <name>Zn(2+)</name>
        <dbReference type="ChEBI" id="CHEBI:29105"/>
        <label>1</label>
    </ligand>
</feature>
<feature type="binding site" evidence="1">
    <location>
        <begin position="15"/>
        <end position="17"/>
    </location>
    <ligand>
        <name>substrate</name>
    </ligand>
</feature>
<feature type="binding site" evidence="1">
    <location>
        <position position="15"/>
    </location>
    <ligand>
        <name>Zn(2+)</name>
        <dbReference type="ChEBI" id="CHEBI:29105"/>
        <label>1</label>
    </ligand>
</feature>
<feature type="binding site" evidence="1">
    <location>
        <position position="41"/>
    </location>
    <ligand>
        <name>substrate</name>
    </ligand>
</feature>
<feature type="binding site" description="via carbamate group" evidence="1">
    <location>
        <position position="99"/>
    </location>
    <ligand>
        <name>Zn(2+)</name>
        <dbReference type="ChEBI" id="CHEBI:29105"/>
        <label>1</label>
    </ligand>
</feature>
<feature type="binding site" description="via carbamate group" evidence="1">
    <location>
        <position position="99"/>
    </location>
    <ligand>
        <name>Zn(2+)</name>
        <dbReference type="ChEBI" id="CHEBI:29105"/>
        <label>2</label>
    </ligand>
</feature>
<feature type="binding site" evidence="1">
    <location>
        <position position="136"/>
    </location>
    <ligand>
        <name>substrate</name>
    </ligand>
</feature>
<feature type="binding site" evidence="1">
    <location>
        <position position="136"/>
    </location>
    <ligand>
        <name>Zn(2+)</name>
        <dbReference type="ChEBI" id="CHEBI:29105"/>
        <label>2</label>
    </ligand>
</feature>
<feature type="binding site" evidence="1">
    <location>
        <position position="174"/>
    </location>
    <ligand>
        <name>Zn(2+)</name>
        <dbReference type="ChEBI" id="CHEBI:29105"/>
        <label>2</label>
    </ligand>
</feature>
<feature type="binding site" evidence="1">
    <location>
        <position position="219"/>
    </location>
    <ligand>
        <name>substrate</name>
    </ligand>
</feature>
<feature type="binding site" evidence="1">
    <location>
        <position position="247"/>
    </location>
    <ligand>
        <name>Zn(2+)</name>
        <dbReference type="ChEBI" id="CHEBI:29105"/>
        <label>1</label>
    </ligand>
</feature>
<feature type="binding site" evidence="1">
    <location>
        <position position="251"/>
    </location>
    <ligand>
        <name>substrate</name>
    </ligand>
</feature>
<feature type="binding site" evidence="1">
    <location>
        <position position="263"/>
    </location>
    <ligand>
        <name>substrate</name>
    </ligand>
</feature>
<feature type="modified residue" description="N6-carboxylysine" evidence="1">
    <location>
        <position position="99"/>
    </location>
</feature>
<reference key="1">
    <citation type="submission" date="2008-02" db="EMBL/GenBank/DDBJ databases">
        <title>Complete sequence of Synechococcus sp. PCC 7002.</title>
        <authorList>
            <person name="Li T."/>
            <person name="Zhao J."/>
            <person name="Zhao C."/>
            <person name="Liu Z."/>
            <person name="Zhao F."/>
            <person name="Marquardt J."/>
            <person name="Nomura C.T."/>
            <person name="Persson S."/>
            <person name="Detter J.C."/>
            <person name="Richardson P.M."/>
            <person name="Lanz C."/>
            <person name="Schuster S.C."/>
            <person name="Wang J."/>
            <person name="Li S."/>
            <person name="Huang X."/>
            <person name="Cai T."/>
            <person name="Yu Z."/>
            <person name="Luo J."/>
            <person name="Zhao J."/>
            <person name="Bryant D.A."/>
        </authorList>
    </citation>
    <scope>NUCLEOTIDE SEQUENCE [LARGE SCALE GENOMIC DNA]</scope>
    <source>
        <strain>ATCC 27264 / PCC 7002 / PR-6</strain>
    </source>
</reference>
<dbReference type="EC" id="3.5.2.3" evidence="1"/>
<dbReference type="EMBL" id="CP000951">
    <property type="protein sequence ID" value="ACB00081.1"/>
    <property type="molecule type" value="Genomic_DNA"/>
</dbReference>
<dbReference type="RefSeq" id="WP_012307702.1">
    <property type="nucleotide sequence ID" value="NZ_JAHHPU010000002.1"/>
</dbReference>
<dbReference type="SMR" id="B1XI96"/>
<dbReference type="STRING" id="32049.SYNPCC7002_A2097"/>
<dbReference type="MEROPS" id="M38.A02"/>
<dbReference type="KEGG" id="syp:SYNPCC7002_A2097"/>
<dbReference type="eggNOG" id="COG0418">
    <property type="taxonomic scope" value="Bacteria"/>
</dbReference>
<dbReference type="HOGENOM" id="CLU_041558_1_0_3"/>
<dbReference type="UniPathway" id="UPA00070">
    <property type="reaction ID" value="UER00117"/>
</dbReference>
<dbReference type="Proteomes" id="UP000001688">
    <property type="component" value="Chromosome"/>
</dbReference>
<dbReference type="GO" id="GO:0005829">
    <property type="term" value="C:cytosol"/>
    <property type="evidence" value="ECO:0007669"/>
    <property type="project" value="TreeGrafter"/>
</dbReference>
<dbReference type="GO" id="GO:0004151">
    <property type="term" value="F:dihydroorotase activity"/>
    <property type="evidence" value="ECO:0007669"/>
    <property type="project" value="UniProtKB-UniRule"/>
</dbReference>
<dbReference type="GO" id="GO:0008270">
    <property type="term" value="F:zinc ion binding"/>
    <property type="evidence" value="ECO:0007669"/>
    <property type="project" value="UniProtKB-UniRule"/>
</dbReference>
<dbReference type="GO" id="GO:0006207">
    <property type="term" value="P:'de novo' pyrimidine nucleobase biosynthetic process"/>
    <property type="evidence" value="ECO:0007669"/>
    <property type="project" value="TreeGrafter"/>
</dbReference>
<dbReference type="GO" id="GO:0044205">
    <property type="term" value="P:'de novo' UMP biosynthetic process"/>
    <property type="evidence" value="ECO:0007669"/>
    <property type="project" value="UniProtKB-UniRule"/>
</dbReference>
<dbReference type="CDD" id="cd01294">
    <property type="entry name" value="DHOase"/>
    <property type="match status" value="1"/>
</dbReference>
<dbReference type="FunFam" id="3.20.20.140:FF:000006">
    <property type="entry name" value="Dihydroorotase"/>
    <property type="match status" value="1"/>
</dbReference>
<dbReference type="Gene3D" id="3.20.20.140">
    <property type="entry name" value="Metal-dependent hydrolases"/>
    <property type="match status" value="1"/>
</dbReference>
<dbReference type="HAMAP" id="MF_00219">
    <property type="entry name" value="PyrC_classII"/>
    <property type="match status" value="1"/>
</dbReference>
<dbReference type="InterPro" id="IPR006680">
    <property type="entry name" value="Amidohydro-rel"/>
</dbReference>
<dbReference type="InterPro" id="IPR004721">
    <property type="entry name" value="DHOdimr"/>
</dbReference>
<dbReference type="InterPro" id="IPR002195">
    <property type="entry name" value="Dihydroorotase_CS"/>
</dbReference>
<dbReference type="InterPro" id="IPR032466">
    <property type="entry name" value="Metal_Hydrolase"/>
</dbReference>
<dbReference type="NCBIfam" id="TIGR00856">
    <property type="entry name" value="pyrC_dimer"/>
    <property type="match status" value="1"/>
</dbReference>
<dbReference type="PANTHER" id="PTHR43137">
    <property type="entry name" value="DIHYDROOROTASE"/>
    <property type="match status" value="1"/>
</dbReference>
<dbReference type="PANTHER" id="PTHR43137:SF1">
    <property type="entry name" value="DIHYDROOROTASE"/>
    <property type="match status" value="1"/>
</dbReference>
<dbReference type="Pfam" id="PF01979">
    <property type="entry name" value="Amidohydro_1"/>
    <property type="match status" value="1"/>
</dbReference>
<dbReference type="PIRSF" id="PIRSF001237">
    <property type="entry name" value="DHOdimr"/>
    <property type="match status" value="1"/>
</dbReference>
<dbReference type="SUPFAM" id="SSF51556">
    <property type="entry name" value="Metallo-dependent hydrolases"/>
    <property type="match status" value="1"/>
</dbReference>
<dbReference type="PROSITE" id="PS00482">
    <property type="entry name" value="DIHYDROOROTASE_1"/>
    <property type="match status" value="1"/>
</dbReference>
<dbReference type="PROSITE" id="PS00483">
    <property type="entry name" value="DIHYDROOROTASE_2"/>
    <property type="match status" value="1"/>
</dbReference>